<comment type="function">
    <text evidence="3 4">Sesquiterpene synthase involved in the biosynthesis of volatile compounds known for their medicinal efficacy for treating enteritis, dysentery, itch and some cancers (PubMed:21818683, PubMed:23072391). Mediates the conversion of (2E,6E)-farnesyl diphosphate (FPP) into beta-elemene, alpha-humulene, delta-cadinene and alpha-selinene (PubMed:21818683, PubMed:23072391).</text>
</comment>
<comment type="catalytic activity">
    <reaction evidence="3 4">
        <text>(2E,6E)-farnesyl diphosphate = alpha-humulene + diphosphate</text>
        <dbReference type="Rhea" id="RHEA:31895"/>
        <dbReference type="ChEBI" id="CHEBI:5768"/>
        <dbReference type="ChEBI" id="CHEBI:33019"/>
        <dbReference type="ChEBI" id="CHEBI:175763"/>
        <dbReference type="EC" id="4.2.3.104"/>
    </reaction>
    <physiologicalReaction direction="left-to-right" evidence="3 4">
        <dbReference type="Rhea" id="RHEA:31896"/>
    </physiologicalReaction>
</comment>
<comment type="catalytic activity">
    <reaction evidence="4">
        <text>(2E,6E)-farnesyl diphosphate = alpha-selinene + diphosphate</text>
        <dbReference type="Rhea" id="RHEA:47052"/>
        <dbReference type="ChEBI" id="CHEBI:33019"/>
        <dbReference type="ChEBI" id="CHEBI:59961"/>
        <dbReference type="ChEBI" id="CHEBI:175763"/>
        <dbReference type="EC" id="4.2.3.198"/>
    </reaction>
    <physiologicalReaction direction="left-to-right" evidence="4">
        <dbReference type="Rhea" id="RHEA:47053"/>
    </physiologicalReaction>
</comment>
<comment type="catalytic activity">
    <reaction evidence="4">
        <text>(2E,6E)-farnesyl diphosphate = delta-cadinene + diphosphate</text>
        <dbReference type="Rhea" id="RHEA:56556"/>
        <dbReference type="ChEBI" id="CHEBI:33019"/>
        <dbReference type="ChEBI" id="CHEBI:140564"/>
        <dbReference type="ChEBI" id="CHEBI:175763"/>
    </reaction>
    <physiologicalReaction direction="left-to-right" evidence="4">
        <dbReference type="Rhea" id="RHEA:56557"/>
    </physiologicalReaction>
</comment>
<comment type="catalytic activity">
    <reaction evidence="4">
        <text>(2E,6E)-farnesyl diphosphate = (1S,2S,4R)-beta-elemene + diphosphate</text>
        <dbReference type="Rhea" id="RHEA:68712"/>
        <dbReference type="ChEBI" id="CHEBI:33019"/>
        <dbReference type="ChEBI" id="CHEBI:62855"/>
        <dbReference type="ChEBI" id="CHEBI:175763"/>
    </reaction>
    <physiologicalReaction direction="left-to-right" evidence="4">
        <dbReference type="Rhea" id="RHEA:68713"/>
    </physiologicalReaction>
</comment>
<comment type="cofactor">
    <cofactor evidence="1">
        <name>Mg(2+)</name>
        <dbReference type="ChEBI" id="CHEBI:18420"/>
    </cofactor>
    <cofactor evidence="1">
        <name>Mn(2+)</name>
        <dbReference type="ChEBI" id="CHEBI:29035"/>
    </cofactor>
    <text evidence="1">Binds 3 Mg(2+) or Mn(2+) ions per subunit.</text>
</comment>
<comment type="pathway">
    <text evidence="3 4">Secondary metabolite biosynthesis; terpenoid biosynthesis.</text>
</comment>
<comment type="tissue specificity">
    <text evidence="4">Mostly expressed in roots and mature leaflets and, to a lower extent, in rachis and developing leaflets.</text>
</comment>
<comment type="domain">
    <text evidence="2">The Asp-Asp-Xaa-Xaa-Asp/Glu (DDXXD/E) motif is important for the catalytic activity, presumably through binding to Mg(2+).</text>
</comment>
<comment type="similarity">
    <text evidence="7">Belongs to the terpene synthase family. Tpsa subfamily.</text>
</comment>
<gene>
    <name evidence="6" type="primary">TPS2</name>
</gene>
<sequence>MSVPVSQIPSLKAKGVIMRRNANYHPNIWGDRFINYVPVDKMNHTCHLQAIEELKDAVRRELLTATGLSQLNLIDAIQRLGVGYHFERELEEALQHVYHKNHYHDDTEDNLYSISLRFRLLRQHGYYVSCDILNKFKDEKDNFKESLTTDVPGMLSLYEAAHPGVHGEDILDEAIAFTTTHLKSLAIDHLRNPSLASQVIHALRQPLHRGVPRLENRRYISIYQDEVSHNKALVKLFKLDFNLVQSLHKKELSEISRWWKELDLANKLPFARDRLVECYFWIIGVYYEPQYSLARKILTKTIAMGSIIDDIYDVYGTPEELNLFTDAIERWDASCMDQLPEYMQIFYEALLDLYNEIEKEIAKEGWSYRVHYAKEAMKILARGYHDESKWFHNNYIPTMEEYMHVALVTSGYTMLTTSSFLGMDNIVTKETFDWVFSGPKIIRASGTIARLMDDVKSHKFEQERGHAASAVECYMEQHGVSEQEVCKEFYQQVGNAWKDINQDFLKPTDVPMTILMRVLNLARVIDVVYKEGDGYTHVGKVMKENVASLLIDPIPV</sequence>
<keyword id="KW-0456">Lyase</keyword>
<keyword id="KW-0460">Magnesium</keyword>
<keyword id="KW-0479">Metal-binding</keyword>
<proteinExistence type="evidence at protein level"/>
<name>TPS2_TOOSI</name>
<evidence type="ECO:0000250" key="1">
    <source>
        <dbReference type="UniProtKB" id="A0A1C9J6A7"/>
    </source>
</evidence>
<evidence type="ECO:0000250" key="2">
    <source>
        <dbReference type="UniProtKB" id="Q40577"/>
    </source>
</evidence>
<evidence type="ECO:0000269" key="3">
    <source>
    </source>
</evidence>
<evidence type="ECO:0000269" key="4">
    <source>
    </source>
</evidence>
<evidence type="ECO:0000303" key="5">
    <source>
    </source>
</evidence>
<evidence type="ECO:0000303" key="6">
    <source>
    </source>
</evidence>
<evidence type="ECO:0000305" key="7"/>
<protein>
    <recommendedName>
        <fullName evidence="6">Sesquiterpene synthase 2</fullName>
        <shortName evidence="6">TsTPS2</shortName>
    </recommendedName>
    <alternativeName>
        <fullName evidence="5 6">Alpha-humulene synthase TPS2</fullName>
        <ecNumber evidence="3 4">4.2.3.104</ecNumber>
    </alternativeName>
    <alternativeName>
        <fullName evidence="6">Alpha-selinene synthase TPS2</fullName>
        <ecNumber evidence="4">4.2.3.198</ecNumber>
    </alternativeName>
    <alternativeName>
        <fullName evidence="6">Beta-elemene synthase TPS2</fullName>
        <ecNumber evidence="4">4.2.3.-</ecNumber>
    </alternativeName>
    <alternativeName>
        <fullName evidence="6">Delta-cadinene synthase TPS2</fullName>
        <ecNumber evidence="4">4.2.3.-</ecNumber>
    </alternativeName>
</protein>
<organism>
    <name type="scientific">Toona sinensis</name>
    <name type="common">Chinese mahogany</name>
    <name type="synonym">Cedrela sinensis</name>
    <dbReference type="NCBI Taxonomy" id="443222"/>
    <lineage>
        <taxon>Eukaryota</taxon>
        <taxon>Viridiplantae</taxon>
        <taxon>Streptophyta</taxon>
        <taxon>Embryophyta</taxon>
        <taxon>Tracheophyta</taxon>
        <taxon>Spermatophyta</taxon>
        <taxon>Magnoliopsida</taxon>
        <taxon>eudicotyledons</taxon>
        <taxon>Gunneridae</taxon>
        <taxon>Pentapetalae</taxon>
        <taxon>rosids</taxon>
        <taxon>malvids</taxon>
        <taxon>Sapindales</taxon>
        <taxon>Meliaceae</taxon>
        <taxon>Toona</taxon>
    </lineage>
</organism>
<dbReference type="EC" id="4.2.3.104" evidence="3 4"/>
<dbReference type="EC" id="4.2.3.198" evidence="4"/>
<dbReference type="EC" id="4.2.3.-" evidence="4"/>
<dbReference type="EMBL" id="AB509224">
    <property type="protein sequence ID" value="BAJ46125.1"/>
    <property type="molecule type" value="mRNA"/>
</dbReference>
<dbReference type="EMBL" id="AB730585">
    <property type="protein sequence ID" value="BAM24405.1"/>
    <property type="molecule type" value="Genomic_DNA"/>
</dbReference>
<dbReference type="SMR" id="I7H727"/>
<dbReference type="UniPathway" id="UPA00213"/>
<dbReference type="GO" id="GO:0102889">
    <property type="term" value="F:beta-elemene synthase activity"/>
    <property type="evidence" value="ECO:0000314"/>
    <property type="project" value="UniProtKB"/>
</dbReference>
<dbReference type="GO" id="GO:0000287">
    <property type="term" value="F:magnesium ion binding"/>
    <property type="evidence" value="ECO:0007669"/>
    <property type="project" value="InterPro"/>
</dbReference>
<dbReference type="GO" id="GO:0010334">
    <property type="term" value="F:sesquiterpene synthase activity"/>
    <property type="evidence" value="ECO:0000314"/>
    <property type="project" value="UniProtKB"/>
</dbReference>
<dbReference type="GO" id="GO:0016102">
    <property type="term" value="P:diterpenoid biosynthetic process"/>
    <property type="evidence" value="ECO:0007669"/>
    <property type="project" value="InterPro"/>
</dbReference>
<dbReference type="GO" id="GO:0051762">
    <property type="term" value="P:sesquiterpene biosynthetic process"/>
    <property type="evidence" value="ECO:0000314"/>
    <property type="project" value="UniProtKB"/>
</dbReference>
<dbReference type="CDD" id="cd00684">
    <property type="entry name" value="Terpene_cyclase_plant_C1"/>
    <property type="match status" value="1"/>
</dbReference>
<dbReference type="FunFam" id="1.10.600.10:FF:000007">
    <property type="entry name" value="Isoprene synthase, chloroplastic"/>
    <property type="match status" value="1"/>
</dbReference>
<dbReference type="FunFam" id="1.50.10.130:FF:000001">
    <property type="entry name" value="Isoprene synthase, chloroplastic"/>
    <property type="match status" value="1"/>
</dbReference>
<dbReference type="Gene3D" id="1.10.600.10">
    <property type="entry name" value="Farnesyl Diphosphate Synthase"/>
    <property type="match status" value="1"/>
</dbReference>
<dbReference type="Gene3D" id="1.50.10.130">
    <property type="entry name" value="Terpene synthase, N-terminal domain"/>
    <property type="match status" value="1"/>
</dbReference>
<dbReference type="InterPro" id="IPR008949">
    <property type="entry name" value="Isoprenoid_synthase_dom_sf"/>
</dbReference>
<dbReference type="InterPro" id="IPR044814">
    <property type="entry name" value="Terpene_cyclase_plant_C1"/>
</dbReference>
<dbReference type="InterPro" id="IPR001906">
    <property type="entry name" value="Terpene_synth_N"/>
</dbReference>
<dbReference type="InterPro" id="IPR036965">
    <property type="entry name" value="Terpene_synth_N_sf"/>
</dbReference>
<dbReference type="InterPro" id="IPR050148">
    <property type="entry name" value="Terpene_synthase-like"/>
</dbReference>
<dbReference type="InterPro" id="IPR005630">
    <property type="entry name" value="Terpene_synthase_metal-bd"/>
</dbReference>
<dbReference type="InterPro" id="IPR008930">
    <property type="entry name" value="Terpenoid_cyclase/PrenylTrfase"/>
</dbReference>
<dbReference type="PANTHER" id="PTHR31225:SF251">
    <property type="entry name" value="(-)-GERMACRENE D SYNTHASE-LIKE ISOFORM X2"/>
    <property type="match status" value="1"/>
</dbReference>
<dbReference type="PANTHER" id="PTHR31225">
    <property type="entry name" value="OS04G0344100 PROTEIN-RELATED"/>
    <property type="match status" value="1"/>
</dbReference>
<dbReference type="Pfam" id="PF01397">
    <property type="entry name" value="Terpene_synth"/>
    <property type="match status" value="1"/>
</dbReference>
<dbReference type="Pfam" id="PF03936">
    <property type="entry name" value="Terpene_synth_C"/>
    <property type="match status" value="1"/>
</dbReference>
<dbReference type="SFLD" id="SFLDS00005">
    <property type="entry name" value="Isoprenoid_Synthase_Type_I"/>
    <property type="match status" value="1"/>
</dbReference>
<dbReference type="SFLD" id="SFLDG01604">
    <property type="entry name" value="Terpene_Cyclase_Like_1_C_Termi"/>
    <property type="match status" value="1"/>
</dbReference>
<dbReference type="SUPFAM" id="SSF48239">
    <property type="entry name" value="Terpenoid cyclases/Protein prenyltransferases"/>
    <property type="match status" value="1"/>
</dbReference>
<dbReference type="SUPFAM" id="SSF48576">
    <property type="entry name" value="Terpenoid synthases"/>
    <property type="match status" value="1"/>
</dbReference>
<feature type="chain" id="PRO_0000454680" description="Sesquiterpene synthase 2">
    <location>
        <begin position="1"/>
        <end position="556"/>
    </location>
</feature>
<feature type="short sequence motif" description="DDXXD motif" evidence="1">
    <location>
        <begin position="309"/>
        <end position="313"/>
    </location>
</feature>
<feature type="binding site" evidence="2">
    <location>
        <position position="309"/>
    </location>
    <ligand>
        <name>Mg(2+)</name>
        <dbReference type="ChEBI" id="CHEBI:18420"/>
        <label>1</label>
    </ligand>
</feature>
<feature type="binding site" evidence="2">
    <location>
        <position position="309"/>
    </location>
    <ligand>
        <name>Mg(2+)</name>
        <dbReference type="ChEBI" id="CHEBI:18420"/>
        <label>2</label>
    </ligand>
</feature>
<feature type="binding site" evidence="2">
    <location>
        <position position="313"/>
    </location>
    <ligand>
        <name>Mg(2+)</name>
        <dbReference type="ChEBI" id="CHEBI:18420"/>
        <label>1</label>
    </ligand>
</feature>
<feature type="binding site" evidence="2">
    <location>
        <position position="313"/>
    </location>
    <ligand>
        <name>Mg(2+)</name>
        <dbReference type="ChEBI" id="CHEBI:18420"/>
        <label>2</label>
    </ligand>
</feature>
<feature type="binding site" evidence="2">
    <location>
        <position position="453"/>
    </location>
    <ligand>
        <name>Mg(2+)</name>
        <dbReference type="ChEBI" id="CHEBI:18420"/>
        <label>3</label>
    </ligand>
</feature>
<feature type="binding site" evidence="2">
    <location>
        <position position="461"/>
    </location>
    <ligand>
        <name>Mg(2+)</name>
        <dbReference type="ChEBI" id="CHEBI:18420"/>
        <label>3</label>
    </ligand>
</feature>
<feature type="sequence conflict" description="In Ref. 1; BAJ46125." evidence="7" ref="1">
    <original>S</original>
    <variation>I</variation>
    <location>
        <position position="113"/>
    </location>
</feature>
<feature type="sequence conflict" description="In Ref. 1; BAJ46125." evidence="7" ref="1">
    <original>PGV</original>
    <variation>LGA</variation>
    <location>
        <begin position="163"/>
        <end position="165"/>
    </location>
</feature>
<feature type="sequence conflict" description="In Ref. 1; BAJ46125." evidence="7" ref="1">
    <original>R</original>
    <variation>K</variation>
    <location>
        <position position="257"/>
    </location>
</feature>
<feature type="sequence conflict" description="In Ref. 1; BAJ46125." evidence="7" ref="1">
    <original>TIAMG</original>
    <variation>IIAMA</variation>
    <location>
        <begin position="301"/>
        <end position="305"/>
    </location>
</feature>
<feature type="sequence conflict" description="In Ref. 1; BAJ46125." evidence="7" ref="1">
    <original>P</original>
    <variation>R</variation>
    <location>
        <position position="318"/>
    </location>
</feature>
<feature type="sequence conflict" description="In Ref. 1; BAJ46125." evidence="7" ref="1">
    <original>Q</original>
    <variation>L</variation>
    <location>
        <position position="338"/>
    </location>
</feature>
<feature type="sequence conflict" description="In Ref. 1; BAJ46125." evidence="7" ref="1">
    <original>A</original>
    <variation>V</variation>
    <location>
        <position position="381"/>
    </location>
</feature>
<feature type="sequence conflict" description="In Ref. 1; BAJ46125." evidence="7" ref="1">
    <original>H</original>
    <variation>R</variation>
    <location>
        <position position="404"/>
    </location>
</feature>
<feature type="sequence conflict" description="In Ref. 1; BAJ46125." evidence="7" ref="1">
    <original>G</original>
    <variation>A</variation>
    <location>
        <position position="411"/>
    </location>
</feature>
<feature type="sequence conflict" description="In Ref. 1; BAJ46125." evidence="7" ref="1">
    <original>GTIA</original>
    <variation>ETIS</variation>
    <location>
        <begin position="446"/>
        <end position="449"/>
    </location>
</feature>
<accession>I7H727</accession>
<accession>E5RM29</accession>
<reference key="1">
    <citation type="journal article" date="2012" name="Curr. Pharm. Biotechnol.">
        <title>Tangy scent in Toona sinensis (Meliaceae) leaflets: isolation, functional characterization, and regulation of TsTPS1 and TsTPS2, two key terpene synthase genes in the biosynthesis of the scent compound.</title>
        <authorList>
            <person name="Hsu C.-Y."/>
            <person name="Huang P.-L."/>
            <person name="Chen C.-M."/>
            <person name="Mao C.-T."/>
            <person name="Chaw S.-M."/>
        </authorList>
    </citation>
    <scope>NUCLEOTIDE SEQUENCE [GENOMIC DNA]</scope>
    <scope>FUNCTION</scope>
    <scope>CATALYTIC ACTIVITY</scope>
    <scope>PATHWAY</scope>
    <scope>TISSUE SPECIFICITY</scope>
</reference>
<reference key="2">
    <citation type="journal article" date="2011" name="Plant Mol. Biol.">
        <title>RNA-seq discovery, functional characterization, and comparison of sesquiterpene synthases from Solanum lycopersicum and Solanum habrochaites trichomes.</title>
        <authorList>
            <person name="Bleeker P.M."/>
            <person name="Spyropoulou E.A."/>
            <person name="Diergaarde P.J."/>
            <person name="Volpin H."/>
            <person name="De Both M.T.J."/>
            <person name="Zerbe P."/>
            <person name="Bohlmann J."/>
            <person name="Falara V."/>
            <person name="Matsuba Y."/>
            <person name="Pichersky E."/>
            <person name="Haring M.A."/>
            <person name="Schuurink R.C."/>
        </authorList>
    </citation>
    <scope>FUNCTION</scope>
    <scope>CATALYTIC ACTIVITY</scope>
    <scope>PATHWAY</scope>
    <scope>GENE FAMILY</scope>
</reference>